<evidence type="ECO:0000250" key="1">
    <source>
        <dbReference type="UniProtKB" id="D3ZBP4"/>
    </source>
</evidence>
<evidence type="ECO:0000250" key="2">
    <source>
        <dbReference type="UniProtKB" id="Q86BA1"/>
    </source>
</evidence>
<evidence type="ECO:0000250" key="3">
    <source>
        <dbReference type="UniProtKB" id="Q8TDZ2"/>
    </source>
</evidence>
<evidence type="ECO:0000250" key="4">
    <source>
        <dbReference type="UniProtKB" id="Q8VDP3"/>
    </source>
</evidence>
<evidence type="ECO:0000255" key="5"/>
<evidence type="ECO:0000255" key="6">
    <source>
        <dbReference type="PROSITE-ProRule" id="PRU00044"/>
    </source>
</evidence>
<evidence type="ECO:0000255" key="7">
    <source>
        <dbReference type="PROSITE-ProRule" id="PRU00125"/>
    </source>
</evidence>
<evidence type="ECO:0000255" key="8">
    <source>
        <dbReference type="PROSITE-ProRule" id="PRU01195"/>
    </source>
</evidence>
<evidence type="ECO:0000256" key="9">
    <source>
        <dbReference type="SAM" id="MobiDB-lite"/>
    </source>
</evidence>
<evidence type="ECO:0000305" key="10"/>
<accession>F1MH07</accession>
<accession>A2VDL7</accession>
<name>MICA1_BOVIN</name>
<keyword id="KW-0009">Actin-binding</keyword>
<keyword id="KW-0175">Coiled coil</keyword>
<keyword id="KW-0963">Cytoplasm</keyword>
<keyword id="KW-0206">Cytoskeleton</keyword>
<keyword id="KW-0967">Endosome</keyword>
<keyword id="KW-0274">FAD</keyword>
<keyword id="KW-0285">Flavoprotein</keyword>
<keyword id="KW-0440">LIM domain</keyword>
<keyword id="KW-0472">Membrane</keyword>
<keyword id="KW-0479">Metal-binding</keyword>
<keyword id="KW-0503">Monooxygenase</keyword>
<keyword id="KW-0521">NADP</keyword>
<keyword id="KW-0560">Oxidoreductase</keyword>
<keyword id="KW-0597">Phosphoprotein</keyword>
<keyword id="KW-1185">Reference proteome</keyword>
<keyword id="KW-0862">Zinc</keyword>
<gene>
    <name type="primary">MICAL1</name>
</gene>
<dbReference type="EC" id="1.14.13.225" evidence="3"/>
<dbReference type="EC" id="1.6.3.1" evidence="3"/>
<dbReference type="EMBL" id="DAAA02025917">
    <property type="status" value="NOT_ANNOTATED_CDS"/>
    <property type="molecule type" value="Genomic_DNA"/>
</dbReference>
<dbReference type="EMBL" id="BC133298">
    <property type="protein sequence ID" value="AAI33299.1"/>
    <property type="molecule type" value="mRNA"/>
</dbReference>
<dbReference type="RefSeq" id="NP_001075051.1">
    <property type="nucleotide sequence ID" value="NM_001081582.1"/>
</dbReference>
<dbReference type="RefSeq" id="XP_005210830.1">
    <property type="nucleotide sequence ID" value="XM_005210773.3"/>
</dbReference>
<dbReference type="RefSeq" id="XP_010806727.1">
    <property type="nucleotide sequence ID" value="XM_010808425.2"/>
</dbReference>
<dbReference type="SMR" id="F1MH07"/>
<dbReference type="FunCoup" id="F1MH07">
    <property type="interactions" value="793"/>
</dbReference>
<dbReference type="STRING" id="9913.ENSBTAP00000010714"/>
<dbReference type="PaxDb" id="9913-ENSBTAP00000010714"/>
<dbReference type="GeneID" id="508306"/>
<dbReference type="KEGG" id="bta:508306"/>
<dbReference type="CTD" id="64780"/>
<dbReference type="VEuPathDB" id="HostDB:ENSBTAG00000008147"/>
<dbReference type="eggNOG" id="KOG1700">
    <property type="taxonomic scope" value="Eukaryota"/>
</dbReference>
<dbReference type="HOGENOM" id="CLU_000329_0_0_1"/>
<dbReference type="InParanoid" id="F1MH07"/>
<dbReference type="OMA" id="APEWKEK"/>
<dbReference type="OrthoDB" id="20799at2759"/>
<dbReference type="TreeFam" id="TF324129"/>
<dbReference type="Proteomes" id="UP000009136">
    <property type="component" value="Chromosome 9"/>
</dbReference>
<dbReference type="Bgee" id="ENSBTAG00000008147">
    <property type="expression patterns" value="Expressed in nasopharynx and 107 other cell types or tissues"/>
</dbReference>
<dbReference type="GO" id="GO:0005737">
    <property type="term" value="C:cytoplasm"/>
    <property type="evidence" value="ECO:0000250"/>
    <property type="project" value="UniProtKB"/>
</dbReference>
<dbReference type="GO" id="GO:0005856">
    <property type="term" value="C:cytoskeleton"/>
    <property type="evidence" value="ECO:0007669"/>
    <property type="project" value="UniProtKB-SubCell"/>
</dbReference>
<dbReference type="GO" id="GO:0005829">
    <property type="term" value="C:cytosol"/>
    <property type="evidence" value="ECO:0000250"/>
    <property type="project" value="UniProtKB"/>
</dbReference>
<dbReference type="GO" id="GO:0010008">
    <property type="term" value="C:endosome membrane"/>
    <property type="evidence" value="ECO:0000250"/>
    <property type="project" value="UniProtKB"/>
</dbReference>
<dbReference type="GO" id="GO:0030496">
    <property type="term" value="C:midbody"/>
    <property type="evidence" value="ECO:0007669"/>
    <property type="project" value="UniProtKB-SubCell"/>
</dbReference>
<dbReference type="GO" id="GO:0003779">
    <property type="term" value="F:actin binding"/>
    <property type="evidence" value="ECO:0000250"/>
    <property type="project" value="UniProtKB"/>
</dbReference>
<dbReference type="GO" id="GO:0120501">
    <property type="term" value="F:F-actin monooxygenase activity"/>
    <property type="evidence" value="ECO:0007669"/>
    <property type="project" value="UniProtKB-EC"/>
</dbReference>
<dbReference type="GO" id="GO:0071949">
    <property type="term" value="F:FAD binding"/>
    <property type="evidence" value="ECO:0000250"/>
    <property type="project" value="UniProtKB"/>
</dbReference>
<dbReference type="GO" id="GO:0046872">
    <property type="term" value="F:metal ion binding"/>
    <property type="evidence" value="ECO:0007669"/>
    <property type="project" value="UniProtKB-KW"/>
</dbReference>
<dbReference type="GO" id="GO:0106294">
    <property type="term" value="F:NADPH oxidase H202-forming activity"/>
    <property type="evidence" value="ECO:0007669"/>
    <property type="project" value="RHEA"/>
</dbReference>
<dbReference type="GO" id="GO:0016709">
    <property type="term" value="F:oxidoreductase activity, acting on paired donors, with incorporation or reduction of molecular oxygen, NAD(P)H as one donor, and incorporation of one atom of oxygen"/>
    <property type="evidence" value="ECO:0000250"/>
    <property type="project" value="UniProtKB"/>
</dbReference>
<dbReference type="GO" id="GO:0030042">
    <property type="term" value="P:actin filament depolymerization"/>
    <property type="evidence" value="ECO:0000250"/>
    <property type="project" value="UniProtKB"/>
</dbReference>
<dbReference type="GO" id="GO:0019417">
    <property type="term" value="P:sulfur oxidation"/>
    <property type="evidence" value="ECO:0000250"/>
    <property type="project" value="UniProtKB"/>
</dbReference>
<dbReference type="CDD" id="cd21196">
    <property type="entry name" value="CH_MICAL1"/>
    <property type="match status" value="1"/>
</dbReference>
<dbReference type="CDD" id="cd09358">
    <property type="entry name" value="LIM_Mical_like"/>
    <property type="match status" value="1"/>
</dbReference>
<dbReference type="FunFam" id="1.10.418.10:FF:000058">
    <property type="entry name" value="F-actin-methionine sulfoxide oxidase MICAL1 isoform X1"/>
    <property type="match status" value="1"/>
</dbReference>
<dbReference type="FunFam" id="2.10.110.10:FF:000106">
    <property type="entry name" value="F-actin-monooxygenase MICAL1 isoform 1"/>
    <property type="match status" value="1"/>
</dbReference>
<dbReference type="FunFam" id="3.50.50.60:FF:000004">
    <property type="entry name" value="protein-methionine sulfoxide oxidase MICAL2 isoform X1"/>
    <property type="match status" value="1"/>
</dbReference>
<dbReference type="Gene3D" id="1.10.418.10">
    <property type="entry name" value="Calponin-like domain"/>
    <property type="match status" value="1"/>
</dbReference>
<dbReference type="Gene3D" id="2.10.110.10">
    <property type="entry name" value="Cysteine Rich Protein"/>
    <property type="match status" value="1"/>
</dbReference>
<dbReference type="Gene3D" id="3.50.50.60">
    <property type="entry name" value="FAD/NAD(P)-binding domain"/>
    <property type="match status" value="1"/>
</dbReference>
<dbReference type="InterPro" id="IPR022735">
    <property type="entry name" value="bMERB_dom"/>
</dbReference>
<dbReference type="InterPro" id="IPR001715">
    <property type="entry name" value="CH_dom"/>
</dbReference>
<dbReference type="InterPro" id="IPR036872">
    <property type="entry name" value="CH_dom_sf"/>
</dbReference>
<dbReference type="InterPro" id="IPR050540">
    <property type="entry name" value="F-actin_Monoox_Mical"/>
</dbReference>
<dbReference type="InterPro" id="IPR002938">
    <property type="entry name" value="FAD-bd"/>
</dbReference>
<dbReference type="InterPro" id="IPR036188">
    <property type="entry name" value="FAD/NAD-bd_sf"/>
</dbReference>
<dbReference type="InterPro" id="IPR001781">
    <property type="entry name" value="Znf_LIM"/>
</dbReference>
<dbReference type="PANTHER" id="PTHR23167:SF35">
    <property type="entry name" value="[F-ACTIN]-MONOOXYGENASE MICAL1"/>
    <property type="match status" value="1"/>
</dbReference>
<dbReference type="PANTHER" id="PTHR23167">
    <property type="entry name" value="CALPONIN HOMOLOGY DOMAIN-CONTAINING PROTEIN DDB_G0272472-RELATED"/>
    <property type="match status" value="1"/>
</dbReference>
<dbReference type="Pfam" id="PF12130">
    <property type="entry name" value="bMERB_dom"/>
    <property type="match status" value="1"/>
</dbReference>
<dbReference type="Pfam" id="PF00307">
    <property type="entry name" value="CH"/>
    <property type="match status" value="1"/>
</dbReference>
<dbReference type="Pfam" id="PF01494">
    <property type="entry name" value="FAD_binding_3"/>
    <property type="match status" value="1"/>
</dbReference>
<dbReference type="Pfam" id="PF00412">
    <property type="entry name" value="LIM"/>
    <property type="match status" value="1"/>
</dbReference>
<dbReference type="Pfam" id="PF25413">
    <property type="entry name" value="Rossman_Mical"/>
    <property type="match status" value="1"/>
</dbReference>
<dbReference type="SMART" id="SM00033">
    <property type="entry name" value="CH"/>
    <property type="match status" value="1"/>
</dbReference>
<dbReference type="SMART" id="SM01203">
    <property type="entry name" value="DUF3585"/>
    <property type="match status" value="1"/>
</dbReference>
<dbReference type="SMART" id="SM00132">
    <property type="entry name" value="LIM"/>
    <property type="match status" value="1"/>
</dbReference>
<dbReference type="SUPFAM" id="SSF47576">
    <property type="entry name" value="Calponin-homology domain, CH-domain"/>
    <property type="match status" value="1"/>
</dbReference>
<dbReference type="SUPFAM" id="SSF51905">
    <property type="entry name" value="FAD/NAD(P)-binding domain"/>
    <property type="match status" value="1"/>
</dbReference>
<dbReference type="SUPFAM" id="SSF57716">
    <property type="entry name" value="Glucocorticoid receptor-like (DNA-binding domain)"/>
    <property type="match status" value="2"/>
</dbReference>
<dbReference type="PROSITE" id="PS51848">
    <property type="entry name" value="BMERB"/>
    <property type="match status" value="1"/>
</dbReference>
<dbReference type="PROSITE" id="PS50021">
    <property type="entry name" value="CH"/>
    <property type="match status" value="1"/>
</dbReference>
<dbReference type="PROSITE" id="PS00478">
    <property type="entry name" value="LIM_DOMAIN_1"/>
    <property type="match status" value="1"/>
</dbReference>
<dbReference type="PROSITE" id="PS50023">
    <property type="entry name" value="LIM_DOMAIN_2"/>
    <property type="match status" value="1"/>
</dbReference>
<sequence length="1070" mass="118696">MASTISTNPAHAHFESFLQAQLCQDVLSSFQGLCGALGVEPGGGLSQYHKVKAQLNYWNAKSLWAKLDKRASQPVYQQGRACTGTKCLVVGAGPCGLRAAVELAMLGARVVLVEKRTKFSRHNVLHLWPFTIHDLRALGAKKFYGRFCTGSLDHISIRQLQLLLLKVALLLGVEIHWGITFTGLQPPPKKGSGWRAQLQPSPPAQLAKYEFDVLISAAGGKFVPEGFTVREMRGKLAIGITANFVNGRTVEETQVPEISGVARIYNQSFFQSLLKATGIDLENIVYYKDDTHYFVMTAKKQCLLRLGVLHKDWPDTERLLGSANVVPEALQRFARAAADFATHGKLGKLEFARDAHGRPDVSAFDFTSMMRAESSARVQERHGTRLLLGLVGDCLVEPFWPLGTGVARGFLAAFDAAWMVKRWAEGAGPLEVLAERESLYQLLSQTSPENMHRNVAQYGLDPATRYPNLNLRAVTPSQVRDLYDMEAKEPVQRMSDETDSGKAATGAVGSQEELLRWCQEQTAGYPGVHVTDLSSSWADGLALCALVHRLRPALLEPSELQGMGALEATSWALKMAEHELGITPVLSAQAMVAGSDPLGLIAYLSHFHSAFKSVPHNPGSVSQGSPGTASAVLFLGKLQRTLQRTRTQENGEDAGGKKPRLEVKAETPSTEEPPVPKPDEPMTPPSQQQDASAEDLCALCGQHLYILERLCADGRFFHRSCFRCHICEATLWPGGYRQHPGDGYLYCLQHLPQTGHEEDSSDRGPESQDLPMSSENNTPSGPATPVDLHQGTSPVPNPIQPTRRLIRLSSPERQRLSSLHLTPDPEMEPPPKPPRSCSTLAHQALEASFKGWGMPVQSPQVLEAMEMGEEERSSSSEEETEEEEDVPLDSDMEHFLRNLAENSGTMNNYPTWRRTLLRRAKEEEMKRFCKAQAIQRRLNEIEAALRELEARGTELELALRSQSSSPEKQKALWVEQLLQLVQKKNSLVAEEAELMITVQELNLEEKQWQLDQELRTYMNREETLKTAADRQAEDQVLRKLLDVVNQRDALIRLQEERRLSELASEPGVQG</sequence>
<proteinExistence type="evidence at transcript level"/>
<protein>
    <recommendedName>
        <fullName>[F-actin]-monooxygenase MICAL1</fullName>
        <ecNumber evidence="3">1.14.13.225</ecNumber>
        <ecNumber evidence="3">1.6.3.1</ecNumber>
    </recommendedName>
    <alternativeName>
        <fullName>Molecule interacting with CasL protein 1</fullName>
        <shortName>MICAL-1</shortName>
    </alternativeName>
</protein>
<organism>
    <name type="scientific">Bos taurus</name>
    <name type="common">Bovine</name>
    <dbReference type="NCBI Taxonomy" id="9913"/>
    <lineage>
        <taxon>Eukaryota</taxon>
        <taxon>Metazoa</taxon>
        <taxon>Chordata</taxon>
        <taxon>Craniata</taxon>
        <taxon>Vertebrata</taxon>
        <taxon>Euteleostomi</taxon>
        <taxon>Mammalia</taxon>
        <taxon>Eutheria</taxon>
        <taxon>Laurasiatheria</taxon>
        <taxon>Artiodactyla</taxon>
        <taxon>Ruminantia</taxon>
        <taxon>Pecora</taxon>
        <taxon>Bovidae</taxon>
        <taxon>Bovinae</taxon>
        <taxon>Bos</taxon>
    </lineage>
</organism>
<comment type="function">
    <text evidence="3">Monooxygenase that promotes depolymerization of F-actin by mediating oxidation of specific methionine residues on actin to form methionine-sulfoxide, resulting in actin filament disassembly and preventing repolymerization. In the absence of actin, it also functions as a NADPH oxidase producing H(2)O(2). Acts as a cytoskeletal regulator that connects NEDD9 to intermediate filaments. Also acts as a negative regulator of apoptosis via its interaction with STK38 and STK38L; acts by antagonizing STK38 and STK38L activation by MST1/STK4. Involved in regulation of lamina-specific connectivity in the nervous system such as the development of lamina-restricted hippocampal connections. Through redox regulation of the actin cytoskeleton controls the intracellular distribution of secretory vesicles containing L1/neurofascin/NgCAM family proteins in neurons, thereby regulating their cell surface levels. May act as Rab effector protein and play a role in vesicle trafficking. Promotes endosomal tubule extension by associating with RAB8 (RAB8A or RAB8B), RAB10 and GRAF (GRAF1/ARHGAP26 or GRAF2/ARHGAP10) on the endosomal membrane which may connect GRAFs to Rabs, thereby participating in neosynthesized Rab8-Rab10-Rab11-dependent protein export (By similarity).</text>
</comment>
<comment type="catalytic activity">
    <reaction evidence="3">
        <text>L-methionyl-[F-actin] + NADPH + O2 + H(+) = L-methionyl-(R)-S-oxide-[F-actin] + NADP(+) + H2O</text>
        <dbReference type="Rhea" id="RHEA:51308"/>
        <dbReference type="Rhea" id="RHEA-COMP:12953"/>
        <dbReference type="Rhea" id="RHEA-COMP:12956"/>
        <dbReference type="ChEBI" id="CHEBI:15377"/>
        <dbReference type="ChEBI" id="CHEBI:15378"/>
        <dbReference type="ChEBI" id="CHEBI:15379"/>
        <dbReference type="ChEBI" id="CHEBI:16044"/>
        <dbReference type="ChEBI" id="CHEBI:45764"/>
        <dbReference type="ChEBI" id="CHEBI:57783"/>
        <dbReference type="ChEBI" id="CHEBI:58349"/>
        <dbReference type="EC" id="1.14.13.225"/>
    </reaction>
</comment>
<comment type="catalytic activity">
    <reaction evidence="3">
        <text>NADPH + O2 + H(+) = H2O2 + NADP(+)</text>
        <dbReference type="Rhea" id="RHEA:11260"/>
        <dbReference type="ChEBI" id="CHEBI:15378"/>
        <dbReference type="ChEBI" id="CHEBI:15379"/>
        <dbReference type="ChEBI" id="CHEBI:16240"/>
        <dbReference type="ChEBI" id="CHEBI:57783"/>
        <dbReference type="ChEBI" id="CHEBI:58349"/>
        <dbReference type="EC" id="1.6.3.1"/>
    </reaction>
</comment>
<comment type="cofactor">
    <cofactor evidence="3">
        <name>FAD</name>
        <dbReference type="ChEBI" id="CHEBI:57692"/>
    </cofactor>
</comment>
<comment type="subunit">
    <text evidence="3">Interacts with STK38 and STK38L. Associates with the SH3 domain of NEDD9. Interacts with VIM and PLXNA3. Interacts with RAB1B, RAB8A, RAB10, RAB13 and RAB15 (in their GTP-bound forms); binding to RAB1B is of low affinity compared to other Rab proteins; at least in case of RAB8A and RAB10 can bind 2 molecules of the Rab proteins simultaneously. Interacts with GRAF1/ARHGAP26, GRAF2/ARHGAP10, RAB8A, RAB8B and RAB10; may bind simultaneously to GRAFs and Rabs and connects GRAFs to Rabs (By similarity). Does not interact with RAB1 and RAB11A (By similarity).</text>
</comment>
<comment type="subcellular location">
    <subcellularLocation>
        <location evidence="3">Cytoplasm</location>
    </subcellularLocation>
    <subcellularLocation>
        <location evidence="3">Cytoplasm</location>
        <location evidence="3">Cytoskeleton</location>
    </subcellularLocation>
    <subcellularLocation>
        <location evidence="3">Endosome membrane</location>
    </subcellularLocation>
    <subcellularLocation>
        <location evidence="3">Midbody</location>
    </subcellularLocation>
</comment>
<comment type="domain">
    <text evidence="3">The bivalent Mical/EHBP Rab binding (bMERB) domain, mediates binding to predominantly Rab8, Rab10, Rab13 and Rab15 (in their GTP-bound forms).</text>
</comment>
<comment type="domain">
    <text evidence="3">The C-terminal coiled coil part contains the plexin-interacting region.</text>
</comment>
<comment type="similarity">
    <text evidence="10">Belongs to the Mical family.</text>
</comment>
<comment type="caution">
    <text evidence="2 3 4">The reaction mechanism is subject to discussion. Some work suggest MICAL enzymes directly oxidize actin methionine residues to produce methionine-(R)-S-oxide. Other publications suggest that the enzyme functions as a NADPH oxidase producing H(2)O(2) (EC 1.6.3.1) and that it is the produced H(2)O(2) that is responsible for the methionine-(R)-S-oxide production.</text>
</comment>
<feature type="chain" id="PRO_0000416298" description="[F-actin]-monooxygenase MICAL1">
    <location>
        <begin position="1"/>
        <end position="1070"/>
    </location>
</feature>
<feature type="domain" description="Calponin-homology (CH)" evidence="6">
    <location>
        <begin position="508"/>
        <end position="612"/>
    </location>
</feature>
<feature type="domain" description="LIM zinc-binding" evidence="7">
    <location>
        <begin position="695"/>
        <end position="757"/>
    </location>
</feature>
<feature type="domain" description="bMERB" evidence="8">
    <location>
        <begin position="921"/>
        <end position="1070"/>
    </location>
</feature>
<feature type="region of interest" description="Monooxygenase domain" evidence="4">
    <location>
        <begin position="1"/>
        <end position="489"/>
    </location>
</feature>
<feature type="region of interest" description="Disordered" evidence="9">
    <location>
        <begin position="643"/>
        <end position="690"/>
    </location>
</feature>
<feature type="region of interest" description="Disordered" evidence="9">
    <location>
        <begin position="754"/>
        <end position="838"/>
    </location>
</feature>
<feature type="region of interest" description="Disordered" evidence="9">
    <location>
        <begin position="865"/>
        <end position="887"/>
    </location>
</feature>
<feature type="region of interest" description="Important for interaction with RAB8A" evidence="3">
    <location>
        <begin position="904"/>
        <end position="1070"/>
    </location>
</feature>
<feature type="coiled-coil region" evidence="5">
    <location>
        <begin position="928"/>
        <end position="1030"/>
    </location>
</feature>
<feature type="compositionally biased region" description="Basic and acidic residues" evidence="9">
    <location>
        <begin position="646"/>
        <end position="665"/>
    </location>
</feature>
<feature type="compositionally biased region" description="Pro residues" evidence="9">
    <location>
        <begin position="671"/>
        <end position="684"/>
    </location>
</feature>
<feature type="compositionally biased region" description="Basic and acidic residues" evidence="9">
    <location>
        <begin position="755"/>
        <end position="766"/>
    </location>
</feature>
<feature type="compositionally biased region" description="Polar residues" evidence="9">
    <location>
        <begin position="770"/>
        <end position="781"/>
    </location>
</feature>
<feature type="compositionally biased region" description="Acidic residues" evidence="9">
    <location>
        <begin position="876"/>
        <end position="887"/>
    </location>
</feature>
<feature type="binding site" evidence="4">
    <location>
        <position position="95"/>
    </location>
    <ligand>
        <name>FAD</name>
        <dbReference type="ChEBI" id="CHEBI:57692"/>
    </ligand>
</feature>
<feature type="binding site" evidence="4">
    <location>
        <begin position="114"/>
        <end position="116"/>
    </location>
    <ligand>
        <name>FAD</name>
        <dbReference type="ChEBI" id="CHEBI:57692"/>
    </ligand>
</feature>
<feature type="binding site" evidence="4">
    <location>
        <begin position="121"/>
        <end position="123"/>
    </location>
    <ligand>
        <name>FAD</name>
        <dbReference type="ChEBI" id="CHEBI:57692"/>
    </ligand>
</feature>
<feature type="binding site" evidence="4">
    <location>
        <position position="181"/>
    </location>
    <ligand>
        <name>FAD</name>
        <dbReference type="ChEBI" id="CHEBI:57692"/>
    </ligand>
</feature>
<feature type="binding site" evidence="4">
    <location>
        <position position="293"/>
    </location>
    <ligand>
        <name>FAD</name>
        <dbReference type="ChEBI" id="CHEBI:57692"/>
    </ligand>
</feature>
<feature type="binding site" evidence="4">
    <location>
        <position position="393"/>
    </location>
    <ligand>
        <name>FAD</name>
        <dbReference type="ChEBI" id="CHEBI:57692"/>
    </ligand>
</feature>
<feature type="binding site" evidence="3">
    <location>
        <position position="697"/>
    </location>
    <ligand>
        <name>Zn(2+)</name>
        <dbReference type="ChEBI" id="CHEBI:29105"/>
        <label>1</label>
    </ligand>
</feature>
<feature type="binding site" evidence="3">
    <location>
        <position position="700"/>
    </location>
    <ligand>
        <name>Zn(2+)</name>
        <dbReference type="ChEBI" id="CHEBI:29105"/>
        <label>1</label>
    </ligand>
</feature>
<feature type="binding site" evidence="3">
    <location>
        <position position="718"/>
    </location>
    <ligand>
        <name>Zn(2+)</name>
        <dbReference type="ChEBI" id="CHEBI:29105"/>
        <label>1</label>
    </ligand>
</feature>
<feature type="binding site" evidence="3">
    <location>
        <position position="721"/>
    </location>
    <ligand>
        <name>Zn(2+)</name>
        <dbReference type="ChEBI" id="CHEBI:29105"/>
        <label>1</label>
    </ligand>
</feature>
<feature type="binding site" evidence="3">
    <location>
        <position position="724"/>
    </location>
    <ligand>
        <name>Zn(2+)</name>
        <dbReference type="ChEBI" id="CHEBI:29105"/>
        <label>2</label>
    </ligand>
</feature>
<feature type="binding site" evidence="3">
    <location>
        <position position="727"/>
    </location>
    <ligand>
        <name>Zn(2+)</name>
        <dbReference type="ChEBI" id="CHEBI:29105"/>
        <label>2</label>
    </ligand>
</feature>
<feature type="binding site" evidence="3">
    <location>
        <position position="747"/>
    </location>
    <ligand>
        <name>Zn(2+)</name>
        <dbReference type="ChEBI" id="CHEBI:29105"/>
        <label>2</label>
    </ligand>
</feature>
<feature type="binding site" evidence="3">
    <location>
        <position position="750"/>
    </location>
    <ligand>
        <name>Zn(2+)</name>
        <dbReference type="ChEBI" id="CHEBI:29105"/>
        <label>2</label>
    </ligand>
</feature>
<feature type="site" description="Important for interaction with ARHGAP26 AND ARHGAP10" evidence="3">
    <location>
        <position position="832"/>
    </location>
</feature>
<feature type="modified residue" description="Phosphothreonine" evidence="1">
    <location>
        <position position="475"/>
    </location>
</feature>
<feature type="modified residue" description="Phosphoserine" evidence="4">
    <location>
        <position position="793"/>
    </location>
</feature>
<feature type="modified residue" description="Phosphoserine" evidence="3">
    <location>
        <position position="875"/>
    </location>
</feature>
<feature type="modified residue" description="Phosphoserine" evidence="3">
    <location>
        <position position="876"/>
    </location>
</feature>
<feature type="modified residue" description="Phosphoserine" evidence="3">
    <location>
        <position position="1060"/>
    </location>
</feature>
<feature type="sequence conflict" description="In Ref. 2; AAI33299." evidence="10" ref="2">
    <original>A</original>
    <variation>G</variation>
    <location>
        <position position="553"/>
    </location>
</feature>
<reference key="1">
    <citation type="journal article" date="2009" name="Genome Biol.">
        <title>A whole-genome assembly of the domestic cow, Bos taurus.</title>
        <authorList>
            <person name="Zimin A.V."/>
            <person name="Delcher A.L."/>
            <person name="Florea L."/>
            <person name="Kelley D.R."/>
            <person name="Schatz M.C."/>
            <person name="Puiu D."/>
            <person name="Hanrahan F."/>
            <person name="Pertea G."/>
            <person name="Van Tassell C.P."/>
            <person name="Sonstegard T.S."/>
            <person name="Marcais G."/>
            <person name="Roberts M."/>
            <person name="Subramanian P."/>
            <person name="Yorke J.A."/>
            <person name="Salzberg S.L."/>
        </authorList>
    </citation>
    <scope>NUCLEOTIDE SEQUENCE [LARGE SCALE GENOMIC DNA]</scope>
    <source>
        <strain>Hereford</strain>
    </source>
</reference>
<reference key="2">
    <citation type="submission" date="2007-02" db="EMBL/GenBank/DDBJ databases">
        <authorList>
            <consortium name="NIH - Mammalian Gene Collection (MGC) project"/>
        </authorList>
    </citation>
    <scope>NUCLEOTIDE SEQUENCE [LARGE SCALE MRNA]</scope>
    <source>
        <strain>Hereford</strain>
        <tissue>Fetal skin</tissue>
    </source>
</reference>